<evidence type="ECO:0000255" key="1"/>
<evidence type="ECO:0000256" key="2">
    <source>
        <dbReference type="SAM" id="MobiDB-lite"/>
    </source>
</evidence>
<evidence type="ECO:0000269" key="3">
    <source>
    </source>
</evidence>
<evidence type="ECO:0000303" key="4">
    <source>
    </source>
</evidence>
<evidence type="ECO:0000305" key="5">
    <source>
    </source>
</evidence>
<evidence type="ECO:0007744" key="6">
    <source>
        <dbReference type="PDB" id="9CRB"/>
    </source>
</evidence>
<comment type="function">
    <text evidence="3">Stable protein with probable toxin activity. Does not show activity on all channels tested. Shows no hemolytic activity on rat erythrocytes.</text>
</comment>
<comment type="domain">
    <text evidence="3">The presence of a 'disulfide through disulfide knot' structurally defines this protein as a knottin.</text>
</comment>
<comment type="miscellaneous">
    <text evidence="3">Exists in two forms, due to cis-trans isomerization which probably occurs at Pro-68.</text>
</comment>
<comment type="miscellaneous">
    <text evidence="3">Negative results: Does not inhibit human voltage-gated potassium channels Kv1.1/KCNA1, Kv1.2/KCNA2, Kv1.3/KCNA3, Kv1.5/KCNA5 and Kv11.1/KCNH2/ERG1, human voltage-gated sodium channels Nav1.4/SCN4A and Nav1.5/SCN5A, mammalian calcium-activated potassium channel mKCa1.1/KCNMA1/BK, and hKCa3.1/KCNN4/IK/SK4, human TRPV1/TRPA1 and human hydrogen voltage-gated channel Hv1/HVCN1.</text>
</comment>
<comment type="online information" name="Biological Magnetic Resonance Data Bank">
    <link uri="https://bmrb.io/data_library/summary/index.php?bmrbId=52543"/>
</comment>
<comment type="online information" name="National Center for Biotechnology Information (NCBI)">
    <link uri="https://trace.ncbi.nlm.nih.gov/Traces/?run=SRR3205707"/>
</comment>
<comment type="online information" name="National Center for Biotechnology Information (NCBI)">
    <link uri="https://trace.ncbi.nlm.nih.gov/Traces/?run=SRR3205708"/>
</comment>
<keyword id="KW-0002">3D-structure</keyword>
<keyword id="KW-0165">Cleavage on pair of basic residues</keyword>
<keyword id="KW-1015">Disulfide bond</keyword>
<keyword id="KW-0960">Knottin</keyword>
<keyword id="KW-0732">Signal</keyword>
<keyword id="KW-0800">Toxin</keyword>
<feature type="signal peptide" evidence="1">
    <location>
        <begin position="1"/>
        <end position="22"/>
    </location>
</feature>
<feature type="propeptide" id="PRO_0000461914" evidence="5">
    <location>
        <begin position="23"/>
        <end position="40"/>
    </location>
</feature>
<feature type="peptide" id="PRO_0000461915" description="U-actitoxin-Avt1" evidence="5">
    <location>
        <begin position="41"/>
        <end position="68"/>
    </location>
</feature>
<feature type="region of interest" description="Disordered" evidence="2">
    <location>
        <begin position="24"/>
        <end position="50"/>
    </location>
</feature>
<feature type="compositionally biased region" description="Basic and acidic residues" evidence="2">
    <location>
        <begin position="32"/>
        <end position="41"/>
    </location>
</feature>
<feature type="disulfide bond" evidence="3 6">
    <location>
        <begin position="42"/>
        <end position="54"/>
    </location>
</feature>
<feature type="disulfide bond" evidence="3 6">
    <location>
        <begin position="46"/>
        <end position="59"/>
    </location>
</feature>
<feature type="disulfide bond" evidence="3 6">
    <location>
        <begin position="52"/>
        <end position="66"/>
    </location>
</feature>
<reference key="1">
    <citation type="journal article" date="2024" name="Biochim. Biophys. Acta">
        <title>Structure and functional studies of Avt1, a novel peptide from the sea anemone Aulactinia veratra.</title>
        <authorList>
            <person name="Albar R.A."/>
            <person name="Smith H.L."/>
            <person name="Sanches K."/>
            <person name="Wai D.C.C."/>
            <person name="Naseem M.U."/>
            <person name="Szanto T.G."/>
            <person name="Panyi G."/>
            <person name="Prentis P.J."/>
            <person name="Norton R.S."/>
        </authorList>
    </citation>
    <scope>NUCLEOTIDE SEQUENCE [MRNA]</scope>
    <scope>FUNCTION</scope>
    <scope>IDENTIFICATION BY MASS SPECTROMETRY</scope>
    <scope>SYNTHESIS OF 41-68</scope>
    <scope>STRUCTURE BY NMR OF 41-68</scope>
    <scope>DISULFIDE BONDS</scope>
    <scope>SUBCELLULAR LOCATION</scope>
    <source>
        <tissue>Venom</tissue>
        <tissue>Venom gland</tissue>
    </source>
</reference>
<protein>
    <recommendedName>
        <fullName evidence="5">U-actitoxin-Avt1</fullName>
        <shortName evidence="4">U-AITX-Avt1</shortName>
    </recommendedName>
</protein>
<accession>P0DRH7</accession>
<proteinExistence type="evidence at protein level"/>
<organism>
    <name type="scientific">Aulactinia veratra</name>
    <name type="common">Green snakelock anemone</name>
    <name type="synonym">Actinia veratra</name>
    <dbReference type="NCBI Taxonomy" id="1730095"/>
    <lineage>
        <taxon>Eukaryota</taxon>
        <taxon>Metazoa</taxon>
        <taxon>Cnidaria</taxon>
        <taxon>Anthozoa</taxon>
        <taxon>Hexacorallia</taxon>
        <taxon>Actiniaria</taxon>
        <taxon>Actiniidae</taxon>
        <taxon>Aulactinia</taxon>
    </lineage>
</organism>
<sequence>MNSKAIISVFLIMLVVVSCTQATYETEDDDEPGPRHSEKRSCARGCGGDSDCPCPGWHCPSPGGRCEP</sequence>
<name>UTX1_AULVR</name>
<dbReference type="PDB" id="9CRB">
    <property type="method" value="NMR"/>
    <property type="chains" value="A=41-68"/>
</dbReference>
<dbReference type="PDBsum" id="9CRB"/>